<comment type="subcellular location">
    <subcellularLocation>
        <location evidence="2">Membrane</location>
        <topology evidence="2">Multi-pass membrane protein</topology>
    </subcellularLocation>
</comment>
<comment type="similarity">
    <text evidence="2">Belongs to the nematode receptor-like protein sre family.</text>
</comment>
<feature type="chain" id="PRO_0000104541" description="Serpentine receptor class epsilon-26">
    <location>
        <begin position="1"/>
        <end position="359"/>
    </location>
</feature>
<feature type="transmembrane region" description="Helical" evidence="1">
    <location>
        <begin position="29"/>
        <end position="49"/>
    </location>
</feature>
<feature type="transmembrane region" description="Helical" evidence="1">
    <location>
        <begin position="66"/>
        <end position="86"/>
    </location>
</feature>
<feature type="transmembrane region" description="Helical" evidence="1">
    <location>
        <begin position="127"/>
        <end position="147"/>
    </location>
</feature>
<feature type="transmembrane region" description="Helical" evidence="1">
    <location>
        <begin position="172"/>
        <end position="192"/>
    </location>
</feature>
<feature type="transmembrane region" description="Helical" evidence="1">
    <location>
        <begin position="195"/>
        <end position="215"/>
    </location>
</feature>
<feature type="transmembrane region" description="Helical" evidence="1">
    <location>
        <begin position="256"/>
        <end position="276"/>
    </location>
</feature>
<feature type="transmembrane region" description="Helical" evidence="1">
    <location>
        <begin position="282"/>
        <end position="302"/>
    </location>
</feature>
<protein>
    <recommendedName>
        <fullName>Serpentine receptor class epsilon-26</fullName>
        <shortName>Protein sre-26</shortName>
    </recommendedName>
</protein>
<accession>O62489</accession>
<evidence type="ECO:0000255" key="1"/>
<evidence type="ECO:0000305" key="2"/>
<dbReference type="EMBL" id="AL023847">
    <property type="protein sequence ID" value="CAA19546.1"/>
    <property type="molecule type" value="Genomic_DNA"/>
</dbReference>
<dbReference type="PIR" id="T27200">
    <property type="entry name" value="T27200"/>
</dbReference>
<dbReference type="RefSeq" id="NP_496637.1">
    <property type="nucleotide sequence ID" value="NM_064236.1"/>
</dbReference>
<dbReference type="FunCoup" id="O62489">
    <property type="interactions" value="1"/>
</dbReference>
<dbReference type="STRING" id="6239.Y57A10C.4.1"/>
<dbReference type="PaxDb" id="6239-Y57A10C.4"/>
<dbReference type="EnsemblMetazoa" id="Y57A10C.4.1">
    <property type="protein sequence ID" value="Y57A10C.4.1"/>
    <property type="gene ID" value="WBGene00013282"/>
</dbReference>
<dbReference type="GeneID" id="190349"/>
<dbReference type="KEGG" id="cel:CELE_Y57A10C.4"/>
<dbReference type="UCSC" id="Y57A10C.4">
    <property type="organism name" value="c. elegans"/>
</dbReference>
<dbReference type="AGR" id="WB:WBGene00013282"/>
<dbReference type="CTD" id="190349"/>
<dbReference type="WormBase" id="Y57A10C.4">
    <property type="protein sequence ID" value="CE18416"/>
    <property type="gene ID" value="WBGene00013282"/>
    <property type="gene designation" value="sre-26"/>
</dbReference>
<dbReference type="eggNOG" id="ENOG502TFUT">
    <property type="taxonomic scope" value="Eukaryota"/>
</dbReference>
<dbReference type="GeneTree" id="ENSGT01130000278788"/>
<dbReference type="HOGENOM" id="CLU_063305_1_0_1"/>
<dbReference type="InParanoid" id="O62489"/>
<dbReference type="OMA" id="CHPLFVC"/>
<dbReference type="OrthoDB" id="5829415at2759"/>
<dbReference type="PhylomeDB" id="O62489"/>
<dbReference type="PRO" id="PR:O62489"/>
<dbReference type="Proteomes" id="UP000001940">
    <property type="component" value="Chromosome II"/>
</dbReference>
<dbReference type="GO" id="GO:0016020">
    <property type="term" value="C:membrane"/>
    <property type="evidence" value="ECO:0007669"/>
    <property type="project" value="UniProtKB-SubCell"/>
</dbReference>
<dbReference type="GO" id="GO:0007606">
    <property type="term" value="P:sensory perception of chemical stimulus"/>
    <property type="evidence" value="ECO:0007669"/>
    <property type="project" value="InterPro"/>
</dbReference>
<dbReference type="InterPro" id="IPR004151">
    <property type="entry name" value="7TM_GPCR_serpentine_rcpt_Sre"/>
</dbReference>
<dbReference type="PANTHER" id="PTHR23128">
    <property type="entry name" value="SERPENTINE RECEPTOR, CLASS E (EPSILON)-RELATED"/>
    <property type="match status" value="1"/>
</dbReference>
<dbReference type="PANTHER" id="PTHR23128:SF60">
    <property type="entry name" value="SERPENTINE RECEPTOR, CLASS E (EPSILON)-RELATED"/>
    <property type="match status" value="1"/>
</dbReference>
<dbReference type="Pfam" id="PF03125">
    <property type="entry name" value="Sre"/>
    <property type="match status" value="1"/>
</dbReference>
<sequence>MFIKLSSTNSTSIFWLPIFFYNEPYWAQCAISSAELPFYMLSAYVVFVSCRIMLKIQLFHDNLMYIGVPMFGSWFLLIAGKLITILYRVRILNVESVKIHENWVFWTDEPEKMLNVQSLDGLVPLLVAGFLEIHFGFSVIFVGLAIVTERVIASMLIDNYEQSTSLLIPISFIIIYQFLAISISLGILFNILGLYVLNASWILCILIGTIMYYYIRKINTKWLQEMQNPNRKRVFTVSQQFQVRENLGAIAIGKRLVFVVLATIVVMGFGIVALVLEITVLFFMHFGENTLFCYPLYIFLVVMNGHPAWKQEFRKYFPKIKIFKKVRPGLVSVEIVEDQKKKLSLETDTYFRQLKSAWT</sequence>
<reference key="1">
    <citation type="journal article" date="1998" name="Science">
        <title>Genome sequence of the nematode C. elegans: a platform for investigating biology.</title>
        <authorList>
            <consortium name="The C. elegans sequencing consortium"/>
        </authorList>
    </citation>
    <scope>NUCLEOTIDE SEQUENCE [LARGE SCALE GENOMIC DNA]</scope>
    <source>
        <strain>Bristol N2</strain>
    </source>
</reference>
<gene>
    <name type="primary">sre-26</name>
    <name type="ORF">Y57A10C.4</name>
</gene>
<organism>
    <name type="scientific">Caenorhabditis elegans</name>
    <dbReference type="NCBI Taxonomy" id="6239"/>
    <lineage>
        <taxon>Eukaryota</taxon>
        <taxon>Metazoa</taxon>
        <taxon>Ecdysozoa</taxon>
        <taxon>Nematoda</taxon>
        <taxon>Chromadorea</taxon>
        <taxon>Rhabditida</taxon>
        <taxon>Rhabditina</taxon>
        <taxon>Rhabditomorpha</taxon>
        <taxon>Rhabditoidea</taxon>
        <taxon>Rhabditidae</taxon>
        <taxon>Peloderinae</taxon>
        <taxon>Caenorhabditis</taxon>
    </lineage>
</organism>
<name>SRE26_CAEEL</name>
<keyword id="KW-0472">Membrane</keyword>
<keyword id="KW-1185">Reference proteome</keyword>
<keyword id="KW-0812">Transmembrane</keyword>
<keyword id="KW-1133">Transmembrane helix</keyword>
<proteinExistence type="inferred from homology"/>